<organism>
    <name type="scientific">Mycobacterium tuberculosis (strain ATCC 25618 / H37Rv)</name>
    <dbReference type="NCBI Taxonomy" id="83332"/>
    <lineage>
        <taxon>Bacteria</taxon>
        <taxon>Bacillati</taxon>
        <taxon>Actinomycetota</taxon>
        <taxon>Actinomycetes</taxon>
        <taxon>Mycobacteriales</taxon>
        <taxon>Mycobacteriaceae</taxon>
        <taxon>Mycobacterium</taxon>
        <taxon>Mycobacterium tuberculosis complex</taxon>
    </lineage>
</organism>
<sequence>MSAVALPRVSGGHDEHGHLEEFRTDPIGLMQRVRDECGDVGTFQLAGKQVVLLSGSHANEFFFRAGDDDLDQAKAYPFMTPIFGEGVVFDASPERRKEMLHNAALRGEQMKGHAATIEDQVRRMIADWGEAGEIDLLDFFAELTIYTSSACLIGKKFRDQLDGRFAKLYHELERGTDPLAYVDPYLPIESFRRRDEARNGLVALVADIMNGRIANPPTDKSDRDMLDVLIAVKAETGTPRFSADEITGMFISMMFAGHHTSSGTASWTLIELMRHRDAYAAVIDELDELYGDGRSVSFHALRQIPQLENVLKETLRLHPPLIILMRVAKGEFEVQGHRIHEGDLVAASPAISNRIPEDFPDPHDFVPARYEQPRQEDLLNRWTWIPFGAGRHRCVGAAFAIMQIKAIFSVLLREYEFEMAQPPESYRNDHSKMVVQLAQPACVRYRRRTGV</sequence>
<comment type="function">
    <text evidence="1 4">Sterol 14alpha-demethylase whose physiological substrate is not known. Accepts electrons from the iron-sulfur ferredoxin Fdx encoded by an adjacent gene (PubMed:10430874, PubMed:16819841). In vitro, catalyzes C14-demethylation of lanosterol, 24,25-dihydrolanosterol and obtusifoliol, to produce the 8,14-dienes stereoselectively (PubMed:10430874).</text>
</comment>
<comment type="catalytic activity">
    <reaction evidence="1">
        <text>a 14alpha-methyl steroid + 6 reduced [2Fe-2S]-[ferredoxin] + 3 O2 + 5 H(+) = a Delta(14) steroid + formate + 6 oxidized [2Fe-2S]-[ferredoxin] + 4 H2O</text>
        <dbReference type="Rhea" id="RHEA:56752"/>
        <dbReference type="Rhea" id="RHEA-COMP:10000"/>
        <dbReference type="Rhea" id="RHEA-COMP:10001"/>
        <dbReference type="ChEBI" id="CHEBI:15377"/>
        <dbReference type="ChEBI" id="CHEBI:15378"/>
        <dbReference type="ChEBI" id="CHEBI:15379"/>
        <dbReference type="ChEBI" id="CHEBI:15740"/>
        <dbReference type="ChEBI" id="CHEBI:33737"/>
        <dbReference type="ChEBI" id="CHEBI:33738"/>
        <dbReference type="ChEBI" id="CHEBI:138029"/>
        <dbReference type="ChEBI" id="CHEBI:138031"/>
        <dbReference type="EC" id="1.14.15.36"/>
    </reaction>
</comment>
<comment type="cofactor">
    <cofactor evidence="1">
        <name>heme b</name>
        <dbReference type="ChEBI" id="CHEBI:60344"/>
    </cofactor>
</comment>
<comment type="activity regulation">
    <text evidence="5">Inhibited by alpha-ethyl-N-4-pyridinyl-benzeneacetamide (EPBA) and 4,4'-dihydroxybenzophenone (DHBP).</text>
</comment>
<comment type="subunit">
    <text evidence="2 3 5 6 7 8">Homodimer.</text>
</comment>
<comment type="subcellular location">
    <subcellularLocation>
        <location evidence="10">Cytoplasm</location>
    </subcellularLocation>
</comment>
<comment type="similarity">
    <text evidence="10">Belongs to the cytochrome P450 family.</text>
</comment>
<name>CP51_MYCTU</name>
<keyword id="KW-0002">3D-structure</keyword>
<keyword id="KW-0963">Cytoplasm</keyword>
<keyword id="KW-0349">Heme</keyword>
<keyword id="KW-0408">Iron</keyword>
<keyword id="KW-0444">Lipid biosynthesis</keyword>
<keyword id="KW-0443">Lipid metabolism</keyword>
<keyword id="KW-0479">Metal-binding</keyword>
<keyword id="KW-0503">Monooxygenase</keyword>
<keyword id="KW-0560">Oxidoreductase</keyword>
<keyword id="KW-1185">Reference proteome</keyword>
<keyword id="KW-0752">Steroid biosynthesis</keyword>
<keyword id="KW-0753">Steroid metabolism</keyword>
<keyword id="KW-0756">Sterol biosynthesis</keyword>
<keyword id="KW-1207">Sterol metabolism</keyword>
<accession>P9WPP9</accession>
<accession>L0T4U1</accession>
<accession>P0A512</accession>
<accession>P77901</accession>
<dbReference type="EC" id="1.14.15.36" evidence="1"/>
<dbReference type="EMBL" id="AL123456">
    <property type="protein sequence ID" value="CCP43511.1"/>
    <property type="molecule type" value="Genomic_DNA"/>
</dbReference>
<dbReference type="PIR" id="G70706">
    <property type="entry name" value="G70706"/>
</dbReference>
<dbReference type="RefSeq" id="NP_215278.1">
    <property type="nucleotide sequence ID" value="NC_000962.3"/>
</dbReference>
<dbReference type="RefSeq" id="WP_003898577.1">
    <property type="nucleotide sequence ID" value="NZ_NVQJ01000035.1"/>
</dbReference>
<dbReference type="PDB" id="1E9X">
    <property type="method" value="X-ray"/>
    <property type="resolution" value="2.10 A"/>
    <property type="chains" value="A=1-451"/>
</dbReference>
<dbReference type="PDB" id="1EA1">
    <property type="method" value="X-ray"/>
    <property type="resolution" value="2.21 A"/>
    <property type="chains" value="A=1-451"/>
</dbReference>
<dbReference type="PDB" id="1H5Z">
    <property type="method" value="X-ray"/>
    <property type="resolution" value="2.05 A"/>
    <property type="chains" value="A=1-451"/>
</dbReference>
<dbReference type="PDB" id="1U13">
    <property type="method" value="X-ray"/>
    <property type="resolution" value="2.01 A"/>
    <property type="chains" value="A=1-451"/>
</dbReference>
<dbReference type="PDB" id="1X8V">
    <property type="method" value="X-ray"/>
    <property type="resolution" value="1.55 A"/>
    <property type="chains" value="A=1-451"/>
</dbReference>
<dbReference type="PDB" id="2BZ9">
    <property type="method" value="X-ray"/>
    <property type="resolution" value="2.21 A"/>
    <property type="chains" value="A/B=1-451"/>
</dbReference>
<dbReference type="PDB" id="2CI0">
    <property type="method" value="X-ray"/>
    <property type="resolution" value="1.53 A"/>
    <property type="chains" value="A=1-451"/>
</dbReference>
<dbReference type="PDB" id="2CIB">
    <property type="method" value="X-ray"/>
    <property type="resolution" value="1.50 A"/>
    <property type="chains" value="A=1-451"/>
</dbReference>
<dbReference type="PDB" id="2VKU">
    <property type="method" value="X-ray"/>
    <property type="resolution" value="1.95 A"/>
    <property type="chains" value="A=1-451"/>
</dbReference>
<dbReference type="PDB" id="2W09">
    <property type="method" value="X-ray"/>
    <property type="resolution" value="1.57 A"/>
    <property type="chains" value="A=1-451"/>
</dbReference>
<dbReference type="PDB" id="2W0A">
    <property type="method" value="X-ray"/>
    <property type="resolution" value="1.60 A"/>
    <property type="chains" value="A=1-451"/>
</dbReference>
<dbReference type="PDB" id="2W0B">
    <property type="method" value="X-ray"/>
    <property type="resolution" value="1.56 A"/>
    <property type="chains" value="A=1-451"/>
</dbReference>
<dbReference type="PDBsum" id="1E9X"/>
<dbReference type="PDBsum" id="1EA1"/>
<dbReference type="PDBsum" id="1H5Z"/>
<dbReference type="PDBsum" id="1U13"/>
<dbReference type="PDBsum" id="1X8V"/>
<dbReference type="PDBsum" id="2BZ9"/>
<dbReference type="PDBsum" id="2CI0"/>
<dbReference type="PDBsum" id="2CIB"/>
<dbReference type="PDBsum" id="2VKU"/>
<dbReference type="PDBsum" id="2W09"/>
<dbReference type="PDBsum" id="2W0A"/>
<dbReference type="PDBsum" id="2W0B"/>
<dbReference type="SMR" id="P9WPP9"/>
<dbReference type="FunCoup" id="P9WPP9">
    <property type="interactions" value="277"/>
</dbReference>
<dbReference type="STRING" id="83332.Rv0764c"/>
<dbReference type="ChEMBL" id="CHEMBL5090"/>
<dbReference type="DrugCentral" id="P9WPP9"/>
<dbReference type="SwissLipids" id="SLP:000001161"/>
<dbReference type="PaxDb" id="83332-Rv0764c"/>
<dbReference type="GeneID" id="888819"/>
<dbReference type="KEGG" id="mtu:Rv0764c"/>
<dbReference type="KEGG" id="mtv:RVBD_0764c"/>
<dbReference type="TubercuList" id="Rv0764c"/>
<dbReference type="eggNOG" id="COG2124">
    <property type="taxonomic scope" value="Bacteria"/>
</dbReference>
<dbReference type="InParanoid" id="P9WPP9"/>
<dbReference type="OrthoDB" id="4746309at2"/>
<dbReference type="PhylomeDB" id="P9WPP9"/>
<dbReference type="BRENDA" id="1.14.14.154">
    <property type="organism ID" value="3445"/>
</dbReference>
<dbReference type="BRENDA" id="1.14.15.36">
    <property type="organism ID" value="3445"/>
</dbReference>
<dbReference type="EvolutionaryTrace" id="P9WPP9"/>
<dbReference type="PRO" id="PR:P9WPP9"/>
<dbReference type="Proteomes" id="UP000001584">
    <property type="component" value="Chromosome"/>
</dbReference>
<dbReference type="GO" id="GO:0005829">
    <property type="term" value="C:cytosol"/>
    <property type="evidence" value="ECO:0000314"/>
    <property type="project" value="MTBBASE"/>
</dbReference>
<dbReference type="GO" id="GO:0020037">
    <property type="term" value="F:heme binding"/>
    <property type="evidence" value="ECO:0000314"/>
    <property type="project" value="MTBBASE"/>
</dbReference>
<dbReference type="GO" id="GO:0005506">
    <property type="term" value="F:iron ion binding"/>
    <property type="evidence" value="ECO:0007669"/>
    <property type="project" value="InterPro"/>
</dbReference>
<dbReference type="GO" id="GO:0016491">
    <property type="term" value="F:oxidoreductase activity"/>
    <property type="evidence" value="ECO:0000318"/>
    <property type="project" value="GO_Central"/>
</dbReference>
<dbReference type="GO" id="GO:0008398">
    <property type="term" value="F:sterol 14-demethylase activity"/>
    <property type="evidence" value="ECO:0000314"/>
    <property type="project" value="MTBBASE"/>
</dbReference>
<dbReference type="GO" id="GO:0016126">
    <property type="term" value="P:sterol biosynthetic process"/>
    <property type="evidence" value="ECO:0007669"/>
    <property type="project" value="UniProtKB-KW"/>
</dbReference>
<dbReference type="GO" id="GO:0016125">
    <property type="term" value="P:sterol metabolic process"/>
    <property type="evidence" value="ECO:0000314"/>
    <property type="project" value="MTBBASE"/>
</dbReference>
<dbReference type="CDD" id="cd11042">
    <property type="entry name" value="CYP51-like"/>
    <property type="match status" value="1"/>
</dbReference>
<dbReference type="FunFam" id="1.10.630.10:FF:000120">
    <property type="entry name" value="Lanosterol 14-alpha demethylase"/>
    <property type="match status" value="1"/>
</dbReference>
<dbReference type="Gene3D" id="1.10.630.10">
    <property type="entry name" value="Cytochrome P450"/>
    <property type="match status" value="1"/>
</dbReference>
<dbReference type="InterPro" id="IPR050529">
    <property type="entry name" value="CYP450_sterol_14alpha_dmase"/>
</dbReference>
<dbReference type="InterPro" id="IPR001128">
    <property type="entry name" value="Cyt_P450"/>
</dbReference>
<dbReference type="InterPro" id="IPR017972">
    <property type="entry name" value="Cyt_P450_CS"/>
</dbReference>
<dbReference type="InterPro" id="IPR002403">
    <property type="entry name" value="Cyt_P450_E_grp-IV"/>
</dbReference>
<dbReference type="InterPro" id="IPR036396">
    <property type="entry name" value="Cyt_P450_sf"/>
</dbReference>
<dbReference type="PANTHER" id="PTHR24304:SF2">
    <property type="entry name" value="24-HYDROXYCHOLESTEROL 7-ALPHA-HYDROXYLASE"/>
    <property type="match status" value="1"/>
</dbReference>
<dbReference type="PANTHER" id="PTHR24304">
    <property type="entry name" value="CYTOCHROME P450 FAMILY 7"/>
    <property type="match status" value="1"/>
</dbReference>
<dbReference type="Pfam" id="PF00067">
    <property type="entry name" value="p450"/>
    <property type="match status" value="1"/>
</dbReference>
<dbReference type="PRINTS" id="PR00465">
    <property type="entry name" value="EP450IV"/>
</dbReference>
<dbReference type="PRINTS" id="PR00385">
    <property type="entry name" value="P450"/>
</dbReference>
<dbReference type="SUPFAM" id="SSF48264">
    <property type="entry name" value="Cytochrome P450"/>
    <property type="match status" value="1"/>
</dbReference>
<dbReference type="PROSITE" id="PS00086">
    <property type="entry name" value="CYTOCHROME_P450"/>
    <property type="match status" value="1"/>
</dbReference>
<protein>
    <recommendedName>
        <fullName evidence="9">Sterol 14alpha-demethylase</fullName>
        <ecNumber evidence="1">1.14.15.36</ecNumber>
    </recommendedName>
    <alternativeName>
        <fullName>CYPLI</fullName>
    </alternativeName>
    <alternativeName>
        <fullName>Cytochrome P450 51</fullName>
    </alternativeName>
    <alternativeName>
        <fullName>Cytochrome P450-14DM</fullName>
    </alternativeName>
    <alternativeName>
        <fullName>Cytochrome P450-LIA1</fullName>
    </alternativeName>
    <alternativeName>
        <fullName>Sterol 14-alpha demethylase</fullName>
    </alternativeName>
</protein>
<reference key="1">
    <citation type="journal article" date="1998" name="Nature">
        <title>Deciphering the biology of Mycobacterium tuberculosis from the complete genome sequence.</title>
        <authorList>
            <person name="Cole S.T."/>
            <person name="Brosch R."/>
            <person name="Parkhill J."/>
            <person name="Garnier T."/>
            <person name="Churcher C.M."/>
            <person name="Harris D.E."/>
            <person name="Gordon S.V."/>
            <person name="Eiglmeier K."/>
            <person name="Gas S."/>
            <person name="Barry C.E. III"/>
            <person name="Tekaia F."/>
            <person name="Badcock K."/>
            <person name="Basham D."/>
            <person name="Brown D."/>
            <person name="Chillingworth T."/>
            <person name="Connor R."/>
            <person name="Davies R.M."/>
            <person name="Devlin K."/>
            <person name="Feltwell T."/>
            <person name="Gentles S."/>
            <person name="Hamlin N."/>
            <person name="Holroyd S."/>
            <person name="Hornsby T."/>
            <person name="Jagels K."/>
            <person name="Krogh A."/>
            <person name="McLean J."/>
            <person name="Moule S."/>
            <person name="Murphy L.D."/>
            <person name="Oliver S."/>
            <person name="Osborne J."/>
            <person name="Quail M.A."/>
            <person name="Rajandream M.A."/>
            <person name="Rogers J."/>
            <person name="Rutter S."/>
            <person name="Seeger K."/>
            <person name="Skelton S."/>
            <person name="Squares S."/>
            <person name="Squares R."/>
            <person name="Sulston J.E."/>
            <person name="Taylor K."/>
            <person name="Whitehead S."/>
            <person name="Barrell B.G."/>
        </authorList>
    </citation>
    <scope>NUCLEOTIDE SEQUENCE [LARGE SCALE GENOMIC DNA]</scope>
    <source>
        <strain>ATCC 25618 / H37Rv</strain>
    </source>
</reference>
<reference key="2">
    <citation type="journal article" date="1998" name="J. Biochem.">
        <title>CYP51-like gene of Mycobacterium tuberculosis actually encodes a P450 similar to eukaryotic CYP51.</title>
        <authorList>
            <person name="Aoyama Y."/>
            <person name="Horiuchi T."/>
            <person name="Gotoh O."/>
            <person name="Noshiro M."/>
            <person name="Yoshida Y."/>
        </authorList>
    </citation>
    <scope>CHARACTERIZATION AS A P450 CYTOCHROME</scope>
</reference>
<reference key="3">
    <citation type="journal article" date="1999" name="Proc. Natl. Acad. Sci. U.S.A.">
        <title>Characterization and catalytic properties of the sterol 14 alpha-demethylase from Mycobacterium tuberculosis.</title>
        <authorList>
            <person name="Bellamine A."/>
            <person name="Mangla A.T."/>
            <person name="Nes W.D."/>
            <person name="Waterman M.R."/>
        </authorList>
    </citation>
    <scope>FUNCTION AS A STEROL 14-ALPHA DEMETHYLASE</scope>
    <scope>CATALYTIC ACTIVITY</scope>
    <scope>COFACTOR</scope>
</reference>
<reference key="4">
    <citation type="journal article" date="2001" name="J. Lipid Res.">
        <title>Structural requirements for substrate recognition of Mycobacterium tuberculosis 14alpha-demethylase: implications for sterol biosynthesis.</title>
        <authorList>
            <person name="Bellamine A."/>
            <person name="Mangla A.T."/>
            <person name="Dennis A.L."/>
            <person name="Nes W.D."/>
            <person name="Waterman M.R."/>
        </authorList>
    </citation>
    <scope>SUBSTRATE SPECIFICITY</scope>
</reference>
<reference key="5">
    <citation type="journal article" date="2006" name="Biochemistry">
        <title>Biophysical characterization of the sterol demethylase P450 from Mycobacterium tuberculosis, its cognate ferredoxin, and their interactions.</title>
        <authorList>
            <person name="McLean K.J."/>
            <person name="Warman A.J."/>
            <person name="Seward H.E."/>
            <person name="Marshall K.R."/>
            <person name="Girvan H.M."/>
            <person name="Cheesman M.R."/>
            <person name="Waterman M.R."/>
            <person name="Munro A.W."/>
        </authorList>
    </citation>
    <scope>FUNCTION</scope>
    <scope>SPECTROSCOPIC STUDIES</scope>
    <source>
        <strain>ATCC 25618 / H37Rv</strain>
    </source>
</reference>
<reference key="6">
    <citation type="journal article" date="2011" name="Mol. Cell. Proteomics">
        <title>Proteogenomic analysis of Mycobacterium tuberculosis by high resolution mass spectrometry.</title>
        <authorList>
            <person name="Kelkar D.S."/>
            <person name="Kumar D."/>
            <person name="Kumar P."/>
            <person name="Balakrishnan L."/>
            <person name="Muthusamy B."/>
            <person name="Yadav A.K."/>
            <person name="Shrivastava P."/>
            <person name="Marimuthu A."/>
            <person name="Anand S."/>
            <person name="Sundaram H."/>
            <person name="Kingsbury R."/>
            <person name="Harsha H.C."/>
            <person name="Nair B."/>
            <person name="Prasad T.S."/>
            <person name="Chauhan D.S."/>
            <person name="Katoch K."/>
            <person name="Katoch V.M."/>
            <person name="Kumar P."/>
            <person name="Chaerkady R."/>
            <person name="Ramachandran S."/>
            <person name="Dash D."/>
            <person name="Pandey A."/>
        </authorList>
    </citation>
    <scope>IDENTIFICATION BY MASS SPECTROMETRY [LARGE SCALE ANALYSIS]</scope>
    <source>
        <strain>ATCC 25618 / H37Rv</strain>
    </source>
</reference>
<reference evidence="11 12" key="7">
    <citation type="journal article" date="2001" name="Proc. Natl. Acad. Sci. U.S.A.">
        <title>Crystal structure of cytochrome P450 14 alpha-sterol demethylase (CYP51) from Mycobacterium tuberculosis in complex with azole inhibitors.</title>
        <authorList>
            <person name="Podust L.M."/>
            <person name="Poulos T.L."/>
            <person name="Waterman M.R."/>
        </authorList>
    </citation>
    <scope>X-RAY CRYSTALLOGRAPHY (2.1 ANGSTROMS) IN COMPLEX WITH HEME B AND AZOLE INHIBITORS</scope>
</reference>
<reference evidence="13 15" key="8">
    <citation type="journal article" date="2004" name="Structure">
        <title>Estriol bound and ligand-free structures of sterol 14alpha-demethylase.</title>
        <authorList>
            <person name="Podust L.M."/>
            <person name="Yermalitskaya L.V."/>
            <person name="Lepesheva G.I."/>
            <person name="Podust V.N."/>
            <person name="Dalmasso E.A."/>
            <person name="Waterman M.R."/>
        </authorList>
    </citation>
    <scope>X-RAY CRYSTALLOGRAPHY (1.55 ANGSTROMS) IN COMPLEX WITH HEME B AND ESTRIOL</scope>
</reference>
<reference evidence="14" key="9">
    <citation type="submission" date="2004-07" db="PDB data bank">
        <title>Crystal structure analysis of the C37L/C151T/C442A-triple mutant of CYP51 from Mycobacterium tuberculosis.</title>
        <authorList>
            <person name="Podust L.M."/>
            <person name="Yermalitskaya L.V."/>
            <person name="Kim Y."/>
            <person name="Waterman M.R."/>
        </authorList>
    </citation>
    <scope>X-RAY CRYSTALLOGRAPHY (2.01 ANGSTROMS) IN COMPLEX WITH HEME B</scope>
    <scope>MUTAGENESIS</scope>
</reference>
<reference evidence="16 17 18" key="10">
    <citation type="journal article" date="2007" name="Antimicrob. Agents Chemother.">
        <title>Small-molecule scaffolds for CYP51 inhibitors identified by high-throughput screening and defined by X-ray crystallography.</title>
        <authorList>
            <person name="Podust L.M."/>
            <person name="von Kries J.P."/>
            <person name="Eddine A.N."/>
            <person name="Kim Y."/>
            <person name="Yermalitskaya L.V."/>
            <person name="Kuehne R."/>
            <person name="Ouellet H."/>
            <person name="Warrier T."/>
            <person name="Altekoster M."/>
            <person name="Lee J.S."/>
            <person name="Rademann J."/>
            <person name="Oschkinat H."/>
            <person name="Kaufmann S.H."/>
            <person name="Waterman M.R."/>
        </authorList>
    </citation>
    <scope>X-RAY CRYSTALLOGRAPHY (1.50 ANGSTROMS) IN COMPLEXES WITH HEME B AND INHIBITORS</scope>
    <scope>ACTIVITY REGULATION</scope>
    <scope>SUBUNIT</scope>
</reference>
<reference evidence="19" key="11">
    <citation type="journal article" date="2008" name="J. Biol. Chem.">
        <title>X-ray structure of 4,4'-dihydroxybenzophenone mimicking sterol substrate in the active site of sterol 14alpha-demethylase (CYP51).</title>
        <authorList>
            <person name="Eddine A.N."/>
            <person name="von Kries J.P."/>
            <person name="Podust M.V."/>
            <person name="Warrier T."/>
            <person name="Kaufmann S.H."/>
            <person name="Podust L.M."/>
        </authorList>
    </citation>
    <scope>X-RAY CRYSTALLOGRAPHY (1.95 ANGSTROMS) IN COMPLEX WITH HEME B AND SUBSTRATE ANALOG</scope>
</reference>
<reference evidence="20 21 22" key="12">
    <citation type="journal article" date="2009" name="PLoS Negl. Trop. Dis.">
        <title>Trypanosoma cruzi CYP51 inhibitor derived from a Mycobacterium tuberculosis screen hit.</title>
        <authorList>
            <person name="Chen C.K."/>
            <person name="Doyle P.S."/>
            <person name="Yermalitskaya L.V."/>
            <person name="Mackey Z.B."/>
            <person name="Ang K.K."/>
            <person name="McKerrow J.H."/>
            <person name="Podust L.M."/>
        </authorList>
    </citation>
    <scope>X-RAY CRYSTALLOGRAPHY (1.56 ANGSTROMS) IN COMPLEXES WITH HEME B AND INHIBITORS</scope>
</reference>
<gene>
    <name type="primary">cyp51</name>
    <name type="ordered locus">Rv0764c</name>
    <name type="ORF">MTCY369.09c</name>
</gene>
<feature type="chain" id="PRO_0000052017" description="Sterol 14alpha-demethylase">
    <location>
        <begin position="1"/>
        <end position="451"/>
    </location>
</feature>
<feature type="binding site" evidence="2 3 5 6 7 8 11 15">
    <location>
        <position position="72"/>
    </location>
    <ligand>
        <name>heme b</name>
        <dbReference type="ChEBI" id="CHEBI:60344"/>
    </ligand>
</feature>
<feature type="binding site" evidence="2 3 5 6 7 8 11 15">
    <location>
        <position position="76"/>
    </location>
    <ligand>
        <name>heme b</name>
        <dbReference type="ChEBI" id="CHEBI:60344"/>
    </ligand>
</feature>
<feature type="binding site" evidence="2 3 5 6 7 8 11 15">
    <location>
        <position position="97"/>
    </location>
    <ligand>
        <name>heme b</name>
        <dbReference type="ChEBI" id="CHEBI:60344"/>
    </ligand>
</feature>
<feature type="binding site" evidence="2 3 5 6 7 8 11 15">
    <location>
        <position position="326"/>
    </location>
    <ligand>
        <name>heme b</name>
        <dbReference type="ChEBI" id="CHEBI:60344"/>
    </ligand>
</feature>
<feature type="binding site" evidence="2 3 5 6 7 8 11 15">
    <location>
        <position position="392"/>
    </location>
    <ligand>
        <name>heme b</name>
        <dbReference type="ChEBI" id="CHEBI:60344"/>
    </ligand>
</feature>
<feature type="binding site" description="axial binding residue" evidence="2 3 5 6 7 8 11 15">
    <location>
        <position position="394"/>
    </location>
    <ligand>
        <name>heme b</name>
        <dbReference type="ChEBI" id="CHEBI:60344"/>
    </ligand>
    <ligandPart>
        <name>Fe</name>
        <dbReference type="ChEBI" id="CHEBI:18248"/>
    </ligandPart>
</feature>
<feature type="helix" evidence="24">
    <location>
        <begin position="19"/>
        <end position="22"/>
    </location>
</feature>
<feature type="helix" evidence="24">
    <location>
        <begin position="26"/>
        <end position="37"/>
    </location>
</feature>
<feature type="strand" evidence="24">
    <location>
        <begin position="39"/>
        <end position="45"/>
    </location>
</feature>
<feature type="strand" evidence="24">
    <location>
        <begin position="48"/>
        <end position="53"/>
    </location>
</feature>
<feature type="helix" evidence="24">
    <location>
        <begin position="56"/>
        <end position="64"/>
    </location>
</feature>
<feature type="turn" evidence="24">
    <location>
        <begin position="67"/>
        <end position="69"/>
    </location>
</feature>
<feature type="strand" evidence="26">
    <location>
        <begin position="70"/>
        <end position="72"/>
    </location>
</feature>
<feature type="helix" evidence="26">
    <location>
        <begin position="73"/>
        <end position="75"/>
    </location>
</feature>
<feature type="helix" evidence="24">
    <location>
        <begin position="77"/>
        <end position="79"/>
    </location>
</feature>
<feature type="helix" evidence="24">
    <location>
        <begin position="80"/>
        <end position="83"/>
    </location>
</feature>
<feature type="helix" evidence="23">
    <location>
        <begin position="96"/>
        <end position="100"/>
    </location>
</feature>
<feature type="helix" evidence="23">
    <location>
        <begin position="103"/>
        <end position="105"/>
    </location>
</feature>
<feature type="helix" evidence="24">
    <location>
        <begin position="107"/>
        <end position="125"/>
    </location>
</feature>
<feature type="strand" evidence="24">
    <location>
        <begin position="130"/>
        <end position="135"/>
    </location>
</feature>
<feature type="helix" evidence="24">
    <location>
        <begin position="136"/>
        <end position="152"/>
    </location>
</feature>
<feature type="helix" evidence="24">
    <location>
        <begin position="155"/>
        <end position="158"/>
    </location>
</feature>
<feature type="helix" evidence="24">
    <location>
        <begin position="163"/>
        <end position="173"/>
    </location>
</feature>
<feature type="helix" evidence="24">
    <location>
        <begin position="178"/>
        <end position="181"/>
    </location>
</feature>
<feature type="helix" evidence="24">
    <location>
        <begin position="189"/>
        <end position="214"/>
    </location>
</feature>
<feature type="strand" evidence="25">
    <location>
        <begin position="220"/>
        <end position="222"/>
    </location>
</feature>
<feature type="helix" evidence="24">
    <location>
        <begin position="225"/>
        <end position="231"/>
    </location>
</feature>
<feature type="strand" evidence="24">
    <location>
        <begin position="237"/>
        <end position="240"/>
    </location>
</feature>
<feature type="helix" evidence="24">
    <location>
        <begin position="243"/>
        <end position="274"/>
    </location>
</feature>
<feature type="helix" evidence="24">
    <location>
        <begin position="276"/>
        <end position="289"/>
    </location>
</feature>
<feature type="helix" evidence="24">
    <location>
        <begin position="290"/>
        <end position="292"/>
    </location>
</feature>
<feature type="helix" evidence="24">
    <location>
        <begin position="296"/>
        <end position="299"/>
    </location>
</feature>
<feature type="helix" evidence="24">
    <location>
        <begin position="305"/>
        <end position="317"/>
    </location>
</feature>
<feature type="strand" evidence="24">
    <location>
        <begin position="324"/>
        <end position="328"/>
    </location>
</feature>
<feature type="strand" evidence="24">
    <location>
        <begin position="332"/>
        <end position="334"/>
    </location>
</feature>
<feature type="strand" evidence="24">
    <location>
        <begin position="337"/>
        <end position="339"/>
    </location>
</feature>
<feature type="strand" evidence="24">
    <location>
        <begin position="344"/>
        <end position="347"/>
    </location>
</feature>
<feature type="helix" evidence="24">
    <location>
        <begin position="349"/>
        <end position="352"/>
    </location>
</feature>
<feature type="turn" evidence="24">
    <location>
        <begin position="356"/>
        <end position="358"/>
    </location>
</feature>
<feature type="strand" evidence="24">
    <location>
        <begin position="359"/>
        <end position="361"/>
    </location>
</feature>
<feature type="helix" evidence="24">
    <location>
        <begin position="367"/>
        <end position="370"/>
    </location>
</feature>
<feature type="turn" evidence="24">
    <location>
        <begin position="372"/>
        <end position="374"/>
    </location>
</feature>
<feature type="helix" evidence="24">
    <location>
        <begin position="376"/>
        <end position="379"/>
    </location>
</feature>
<feature type="turn" evidence="24">
    <location>
        <begin position="381"/>
        <end position="383"/>
    </location>
</feature>
<feature type="helix" evidence="24">
    <location>
        <begin position="390"/>
        <end position="392"/>
    </location>
</feature>
<feature type="helix" evidence="24">
    <location>
        <begin position="397"/>
        <end position="414"/>
    </location>
</feature>
<feature type="strand" evidence="24">
    <location>
        <begin position="415"/>
        <end position="421"/>
    </location>
</feature>
<feature type="helix" evidence="24">
    <location>
        <begin position="423"/>
        <end position="425"/>
    </location>
</feature>
<feature type="strand" evidence="24">
    <location>
        <begin position="431"/>
        <end position="434"/>
    </location>
</feature>
<feature type="strand" evidence="24">
    <location>
        <begin position="442"/>
        <end position="447"/>
    </location>
</feature>
<proteinExistence type="evidence at protein level"/>
<evidence type="ECO:0000269" key="1">
    <source>
    </source>
</evidence>
<evidence type="ECO:0000269" key="2">
    <source>
    </source>
</evidence>
<evidence type="ECO:0000269" key="3">
    <source>
    </source>
</evidence>
<evidence type="ECO:0000269" key="4">
    <source>
    </source>
</evidence>
<evidence type="ECO:0000269" key="5">
    <source>
    </source>
</evidence>
<evidence type="ECO:0000269" key="6">
    <source>
    </source>
</evidence>
<evidence type="ECO:0000269" key="7">
    <source>
    </source>
</evidence>
<evidence type="ECO:0000269" key="8">
    <source ref="9"/>
</evidence>
<evidence type="ECO:0000303" key="9">
    <source>
    </source>
</evidence>
<evidence type="ECO:0000305" key="10"/>
<evidence type="ECO:0007744" key="11">
    <source>
        <dbReference type="PDB" id="1E9X"/>
    </source>
</evidence>
<evidence type="ECO:0007744" key="12">
    <source>
        <dbReference type="PDB" id="1EA1"/>
    </source>
</evidence>
<evidence type="ECO:0007744" key="13">
    <source>
        <dbReference type="PDB" id="1H5Z"/>
    </source>
</evidence>
<evidence type="ECO:0007744" key="14">
    <source>
        <dbReference type="PDB" id="1U13"/>
    </source>
</evidence>
<evidence type="ECO:0007744" key="15">
    <source>
        <dbReference type="PDB" id="1X8V"/>
    </source>
</evidence>
<evidence type="ECO:0007744" key="16">
    <source>
        <dbReference type="PDB" id="2BZ9"/>
    </source>
</evidence>
<evidence type="ECO:0007744" key="17">
    <source>
        <dbReference type="PDB" id="2CI0"/>
    </source>
</evidence>
<evidence type="ECO:0007744" key="18">
    <source>
        <dbReference type="PDB" id="2CIB"/>
    </source>
</evidence>
<evidence type="ECO:0007744" key="19">
    <source>
        <dbReference type="PDB" id="2VKU"/>
    </source>
</evidence>
<evidence type="ECO:0007744" key="20">
    <source>
        <dbReference type="PDB" id="2W09"/>
    </source>
</evidence>
<evidence type="ECO:0007744" key="21">
    <source>
        <dbReference type="PDB" id="2W0A"/>
    </source>
</evidence>
<evidence type="ECO:0007744" key="22">
    <source>
        <dbReference type="PDB" id="2W0B"/>
    </source>
</evidence>
<evidence type="ECO:0007829" key="23">
    <source>
        <dbReference type="PDB" id="1X8V"/>
    </source>
</evidence>
<evidence type="ECO:0007829" key="24">
    <source>
        <dbReference type="PDB" id="2CIB"/>
    </source>
</evidence>
<evidence type="ECO:0007829" key="25">
    <source>
        <dbReference type="PDB" id="2VKU"/>
    </source>
</evidence>
<evidence type="ECO:0007829" key="26">
    <source>
        <dbReference type="PDB" id="2W09"/>
    </source>
</evidence>